<reference key="1">
    <citation type="journal article" date="2000" name="Nature">
        <title>Sequence and analysis of chromosome 1 of the plant Arabidopsis thaliana.</title>
        <authorList>
            <person name="Theologis A."/>
            <person name="Ecker J.R."/>
            <person name="Palm C.J."/>
            <person name="Federspiel N.A."/>
            <person name="Kaul S."/>
            <person name="White O."/>
            <person name="Alonso J."/>
            <person name="Altafi H."/>
            <person name="Araujo R."/>
            <person name="Bowman C.L."/>
            <person name="Brooks S.Y."/>
            <person name="Buehler E."/>
            <person name="Chan A."/>
            <person name="Chao Q."/>
            <person name="Chen H."/>
            <person name="Cheuk R.F."/>
            <person name="Chin C.W."/>
            <person name="Chung M.K."/>
            <person name="Conn L."/>
            <person name="Conway A.B."/>
            <person name="Conway A.R."/>
            <person name="Creasy T.H."/>
            <person name="Dewar K."/>
            <person name="Dunn P."/>
            <person name="Etgu P."/>
            <person name="Feldblyum T.V."/>
            <person name="Feng J.-D."/>
            <person name="Fong B."/>
            <person name="Fujii C.Y."/>
            <person name="Gill J.E."/>
            <person name="Goldsmith A.D."/>
            <person name="Haas B."/>
            <person name="Hansen N.F."/>
            <person name="Hughes B."/>
            <person name="Huizar L."/>
            <person name="Hunter J.L."/>
            <person name="Jenkins J."/>
            <person name="Johnson-Hopson C."/>
            <person name="Khan S."/>
            <person name="Khaykin E."/>
            <person name="Kim C.J."/>
            <person name="Koo H.L."/>
            <person name="Kremenetskaia I."/>
            <person name="Kurtz D.B."/>
            <person name="Kwan A."/>
            <person name="Lam B."/>
            <person name="Langin-Hooper S."/>
            <person name="Lee A."/>
            <person name="Lee J.M."/>
            <person name="Lenz C.A."/>
            <person name="Li J.H."/>
            <person name="Li Y.-P."/>
            <person name="Lin X."/>
            <person name="Liu S.X."/>
            <person name="Liu Z.A."/>
            <person name="Luros J.S."/>
            <person name="Maiti R."/>
            <person name="Marziali A."/>
            <person name="Militscher J."/>
            <person name="Miranda M."/>
            <person name="Nguyen M."/>
            <person name="Nierman W.C."/>
            <person name="Osborne B.I."/>
            <person name="Pai G."/>
            <person name="Peterson J."/>
            <person name="Pham P.K."/>
            <person name="Rizzo M."/>
            <person name="Rooney T."/>
            <person name="Rowley D."/>
            <person name="Sakano H."/>
            <person name="Salzberg S.L."/>
            <person name="Schwartz J.R."/>
            <person name="Shinn P."/>
            <person name="Southwick A.M."/>
            <person name="Sun H."/>
            <person name="Tallon L.J."/>
            <person name="Tambunga G."/>
            <person name="Toriumi M.J."/>
            <person name="Town C.D."/>
            <person name="Utterback T."/>
            <person name="Van Aken S."/>
            <person name="Vaysberg M."/>
            <person name="Vysotskaia V.S."/>
            <person name="Walker M."/>
            <person name="Wu D."/>
            <person name="Yu G."/>
            <person name="Fraser C.M."/>
            <person name="Venter J.C."/>
            <person name="Davis R.W."/>
        </authorList>
    </citation>
    <scope>NUCLEOTIDE SEQUENCE [LARGE SCALE GENOMIC DNA]</scope>
    <source>
        <strain>cv. Columbia</strain>
    </source>
</reference>
<reference key="2">
    <citation type="journal article" date="2017" name="Plant J.">
        <title>Araport11: a complete reannotation of the Arabidopsis thaliana reference genome.</title>
        <authorList>
            <person name="Cheng C.Y."/>
            <person name="Krishnakumar V."/>
            <person name="Chan A.P."/>
            <person name="Thibaud-Nissen F."/>
            <person name="Schobel S."/>
            <person name="Town C.D."/>
        </authorList>
    </citation>
    <scope>GENOME REANNOTATION</scope>
    <source>
        <strain>cv. Columbia</strain>
    </source>
</reference>
<reference key="3">
    <citation type="journal article" date="2003" name="Science">
        <title>Empirical analysis of transcriptional activity in the Arabidopsis genome.</title>
        <authorList>
            <person name="Yamada K."/>
            <person name="Lim J."/>
            <person name="Dale J.M."/>
            <person name="Chen H."/>
            <person name="Shinn P."/>
            <person name="Palm C.J."/>
            <person name="Southwick A.M."/>
            <person name="Wu H.C."/>
            <person name="Kim C.J."/>
            <person name="Nguyen M."/>
            <person name="Pham P.K."/>
            <person name="Cheuk R.F."/>
            <person name="Karlin-Newmann G."/>
            <person name="Liu S.X."/>
            <person name="Lam B."/>
            <person name="Sakano H."/>
            <person name="Wu T."/>
            <person name="Yu G."/>
            <person name="Miranda M."/>
            <person name="Quach H.L."/>
            <person name="Tripp M."/>
            <person name="Chang C.H."/>
            <person name="Lee J.M."/>
            <person name="Toriumi M.J."/>
            <person name="Chan M.M."/>
            <person name="Tang C.C."/>
            <person name="Onodera C.S."/>
            <person name="Deng J.M."/>
            <person name="Akiyama K."/>
            <person name="Ansari Y."/>
            <person name="Arakawa T."/>
            <person name="Banh J."/>
            <person name="Banno F."/>
            <person name="Bowser L."/>
            <person name="Brooks S.Y."/>
            <person name="Carninci P."/>
            <person name="Chao Q."/>
            <person name="Choy N."/>
            <person name="Enju A."/>
            <person name="Goldsmith A.D."/>
            <person name="Gurjal M."/>
            <person name="Hansen N.F."/>
            <person name="Hayashizaki Y."/>
            <person name="Johnson-Hopson C."/>
            <person name="Hsuan V.W."/>
            <person name="Iida K."/>
            <person name="Karnes M."/>
            <person name="Khan S."/>
            <person name="Koesema E."/>
            <person name="Ishida J."/>
            <person name="Jiang P.X."/>
            <person name="Jones T."/>
            <person name="Kawai J."/>
            <person name="Kamiya A."/>
            <person name="Meyers C."/>
            <person name="Nakajima M."/>
            <person name="Narusaka M."/>
            <person name="Seki M."/>
            <person name="Sakurai T."/>
            <person name="Satou M."/>
            <person name="Tamse R."/>
            <person name="Vaysberg M."/>
            <person name="Wallender E.K."/>
            <person name="Wong C."/>
            <person name="Yamamura Y."/>
            <person name="Yuan S."/>
            <person name="Shinozaki K."/>
            <person name="Davis R.W."/>
            <person name="Theologis A."/>
            <person name="Ecker J.R."/>
        </authorList>
    </citation>
    <scope>NUCLEOTIDE SEQUENCE [LARGE SCALE MRNA]</scope>
    <source>
        <strain>cv. Columbia</strain>
    </source>
</reference>
<reference key="4">
    <citation type="journal article" date="1999" name="Biochim. Biophys. Acta">
        <title>Cloning and sequencing of cDNAs specifying a novel class of phosphoribosyl diphosphate synthase in Arabidopsis thaliana.</title>
        <authorList>
            <person name="Krath B.N."/>
            <person name="Eriksen T.A."/>
            <person name="Poulsen T.S."/>
            <person name="Hove-Jensen B."/>
        </authorList>
    </citation>
    <scope>NUCLEOTIDE SEQUENCE [MRNA] OF 89-400</scope>
    <source>
        <strain>cv. Columbia</strain>
    </source>
</reference>
<sequence length="400" mass="43333">MASLALTSPPSVKIPSYLSSSSSSLFSRSSISFRTTESRSRICVSGYAKCNLPKALNGNARVPIINETTIPKFFDSSRLEKSVSRNNTKLKLFSGTANPALSQEIAWYMGLELGKVSIKRFADGEIYVQLKESVRGCDVFLVQPTCTPTNENLMELLIMVDACRRASAKKVTAVIPYFGYARADRKTQGRESIAAKLVANLITEAGADRVLACDLHSGQSMGYFDIPVDHVYCQPVILDYLASKSISSEDLVVVSPDVGGVARARAFAKKLSDAPLAIVDKRRHGHNVAEVMNLIGDVKGKVAVMVDDIIDTAGTIVKGAALLHEEGAREVYACCTHAVFSPPAIERLSSGLLQEVIVTNTLPVAEKNYFPQLTILSVANLLGETIWRVHDDSSVSSIFL</sequence>
<accession>Q42583</accession>
<accession>Q9LQM0</accession>
<proteinExistence type="evidence at transcript level"/>
<keyword id="KW-0067">ATP-binding</keyword>
<keyword id="KW-0150">Chloroplast</keyword>
<keyword id="KW-0418">Kinase</keyword>
<keyword id="KW-0460">Magnesium</keyword>
<keyword id="KW-0479">Metal-binding</keyword>
<keyword id="KW-0545">Nucleotide biosynthesis</keyword>
<keyword id="KW-0547">Nucleotide-binding</keyword>
<keyword id="KW-0934">Plastid</keyword>
<keyword id="KW-1185">Reference proteome</keyword>
<keyword id="KW-0808">Transferase</keyword>
<keyword id="KW-0809">Transit peptide</keyword>
<protein>
    <recommendedName>
        <fullName>Ribose-phosphate pyrophosphokinase 2, chloroplastic</fullName>
        <ecNumber>2.7.6.1</ecNumber>
    </recommendedName>
    <alternativeName>
        <fullName>PRS II</fullName>
    </alternativeName>
    <alternativeName>
        <fullName>Phosphoribosyl pyrophosphate synthase 2</fullName>
    </alternativeName>
</protein>
<feature type="transit peptide" description="Chloroplast" evidence="1">
    <location>
        <begin position="1"/>
        <end position="44"/>
    </location>
</feature>
<feature type="chain" id="PRO_0000141093" description="Ribose-phosphate pyrophosphokinase 2, chloroplastic">
    <location>
        <begin position="45"/>
        <end position="400"/>
    </location>
</feature>
<feature type="region of interest" description="Binding of phosphoribosylpyrophosphate" evidence="1">
    <location>
        <begin position="300"/>
        <end position="315"/>
    </location>
</feature>
<feature type="binding site" evidence="1">
    <location>
        <position position="214"/>
    </location>
    <ligand>
        <name>Mg(2+)</name>
        <dbReference type="ChEBI" id="CHEBI:18420"/>
    </ligand>
</feature>
<feature type="binding site" evidence="1">
    <location>
        <position position="216"/>
    </location>
    <ligand>
        <name>Mg(2+)</name>
        <dbReference type="ChEBI" id="CHEBI:18420"/>
    </ligand>
</feature>
<feature type="binding site" evidence="1">
    <location>
        <position position="225"/>
    </location>
    <ligand>
        <name>Mg(2+)</name>
        <dbReference type="ChEBI" id="CHEBI:18420"/>
    </ligand>
</feature>
<feature type="binding site" evidence="1">
    <location>
        <position position="229"/>
    </location>
    <ligand>
        <name>Mg(2+)</name>
        <dbReference type="ChEBI" id="CHEBI:18420"/>
    </ligand>
</feature>
<organism>
    <name type="scientific">Arabidopsis thaliana</name>
    <name type="common">Mouse-ear cress</name>
    <dbReference type="NCBI Taxonomy" id="3702"/>
    <lineage>
        <taxon>Eukaryota</taxon>
        <taxon>Viridiplantae</taxon>
        <taxon>Streptophyta</taxon>
        <taxon>Embryophyta</taxon>
        <taxon>Tracheophyta</taxon>
        <taxon>Spermatophyta</taxon>
        <taxon>Magnoliopsida</taxon>
        <taxon>eudicotyledons</taxon>
        <taxon>Gunneridae</taxon>
        <taxon>Pentapetalae</taxon>
        <taxon>rosids</taxon>
        <taxon>malvids</taxon>
        <taxon>Brassicales</taxon>
        <taxon>Brassicaceae</taxon>
        <taxon>Camelineae</taxon>
        <taxon>Arabidopsis</taxon>
    </lineage>
</organism>
<evidence type="ECO:0000255" key="1"/>
<evidence type="ECO:0000305" key="2"/>
<comment type="catalytic activity">
    <reaction>
        <text>D-ribose 5-phosphate + ATP = 5-phospho-alpha-D-ribose 1-diphosphate + AMP + H(+)</text>
        <dbReference type="Rhea" id="RHEA:15609"/>
        <dbReference type="ChEBI" id="CHEBI:15378"/>
        <dbReference type="ChEBI" id="CHEBI:30616"/>
        <dbReference type="ChEBI" id="CHEBI:58017"/>
        <dbReference type="ChEBI" id="CHEBI:78346"/>
        <dbReference type="ChEBI" id="CHEBI:456215"/>
        <dbReference type="EC" id="2.7.6.1"/>
    </reaction>
</comment>
<comment type="subcellular location">
    <subcellularLocation>
        <location evidence="2">Plastid</location>
        <location evidence="2">Chloroplast</location>
    </subcellularLocation>
</comment>
<comment type="similarity">
    <text evidence="2">Belongs to the ribose-phosphate pyrophosphokinase family.</text>
</comment>
<gene>
    <name type="primary">PRS2</name>
    <name type="ordered locus">At1g32380</name>
    <name type="ORF">F5D14.15</name>
</gene>
<dbReference type="EC" id="2.7.6.1"/>
<dbReference type="EMBL" id="AC007767">
    <property type="protein sequence ID" value="AAF81335.1"/>
    <property type="molecule type" value="Genomic_DNA"/>
</dbReference>
<dbReference type="EMBL" id="CP002684">
    <property type="protein sequence ID" value="AEE31475.1"/>
    <property type="molecule type" value="Genomic_DNA"/>
</dbReference>
<dbReference type="EMBL" id="AF439851">
    <property type="protein sequence ID" value="AAL27519.1"/>
    <property type="molecule type" value="mRNA"/>
</dbReference>
<dbReference type="EMBL" id="AY125555">
    <property type="protein sequence ID" value="AAM78065.1"/>
    <property type="molecule type" value="mRNA"/>
</dbReference>
<dbReference type="EMBL" id="X92974">
    <property type="protein sequence ID" value="CAA63552.1"/>
    <property type="molecule type" value="mRNA"/>
</dbReference>
<dbReference type="PIR" id="G86448">
    <property type="entry name" value="G86448"/>
</dbReference>
<dbReference type="PIR" id="S71262">
    <property type="entry name" value="S71262"/>
</dbReference>
<dbReference type="RefSeq" id="NP_174516.1">
    <property type="nucleotide sequence ID" value="NM_102972.3"/>
</dbReference>
<dbReference type="SMR" id="Q42583"/>
<dbReference type="BioGRID" id="25365">
    <property type="interactions" value="37"/>
</dbReference>
<dbReference type="FunCoup" id="Q42583">
    <property type="interactions" value="2595"/>
</dbReference>
<dbReference type="IntAct" id="Q42583">
    <property type="interactions" value="5"/>
</dbReference>
<dbReference type="STRING" id="3702.Q42583"/>
<dbReference type="iPTMnet" id="Q42583"/>
<dbReference type="PaxDb" id="3702-AT1G32380.1"/>
<dbReference type="ProteomicsDB" id="237139"/>
<dbReference type="EnsemblPlants" id="AT1G32380.1">
    <property type="protein sequence ID" value="AT1G32380.1"/>
    <property type="gene ID" value="AT1G32380"/>
</dbReference>
<dbReference type="GeneID" id="840131"/>
<dbReference type="Gramene" id="AT1G32380.1">
    <property type="protein sequence ID" value="AT1G32380.1"/>
    <property type="gene ID" value="AT1G32380"/>
</dbReference>
<dbReference type="KEGG" id="ath:AT1G32380"/>
<dbReference type="Araport" id="AT1G32380"/>
<dbReference type="TAIR" id="AT1G32380">
    <property type="gene designation" value="PRS2"/>
</dbReference>
<dbReference type="eggNOG" id="KOG1448">
    <property type="taxonomic scope" value="Eukaryota"/>
</dbReference>
<dbReference type="HOGENOM" id="CLU_033546_1_0_1"/>
<dbReference type="InParanoid" id="Q42583"/>
<dbReference type="OrthoDB" id="413572at2759"/>
<dbReference type="PhylomeDB" id="Q42583"/>
<dbReference type="BioCyc" id="ARA:AT1G32380-MONOMER"/>
<dbReference type="CD-CODE" id="4299E36E">
    <property type="entry name" value="Nucleolus"/>
</dbReference>
<dbReference type="PRO" id="PR:Q42583"/>
<dbReference type="Proteomes" id="UP000006548">
    <property type="component" value="Chromosome 1"/>
</dbReference>
<dbReference type="ExpressionAtlas" id="Q42583">
    <property type="expression patterns" value="baseline and differential"/>
</dbReference>
<dbReference type="GO" id="GO:0009507">
    <property type="term" value="C:chloroplast"/>
    <property type="evidence" value="ECO:0007669"/>
    <property type="project" value="UniProtKB-SubCell"/>
</dbReference>
<dbReference type="GO" id="GO:0005524">
    <property type="term" value="F:ATP binding"/>
    <property type="evidence" value="ECO:0007669"/>
    <property type="project" value="UniProtKB-KW"/>
</dbReference>
<dbReference type="GO" id="GO:0016301">
    <property type="term" value="F:kinase activity"/>
    <property type="evidence" value="ECO:0007669"/>
    <property type="project" value="UniProtKB-KW"/>
</dbReference>
<dbReference type="GO" id="GO:0000287">
    <property type="term" value="F:magnesium ion binding"/>
    <property type="evidence" value="ECO:0007669"/>
    <property type="project" value="InterPro"/>
</dbReference>
<dbReference type="GO" id="GO:0004749">
    <property type="term" value="F:ribose phosphate diphosphokinase activity"/>
    <property type="evidence" value="ECO:0007669"/>
    <property type="project" value="UniProtKB-EC"/>
</dbReference>
<dbReference type="GO" id="GO:0009165">
    <property type="term" value="P:nucleotide biosynthetic process"/>
    <property type="evidence" value="ECO:0007669"/>
    <property type="project" value="UniProtKB-KW"/>
</dbReference>
<dbReference type="GO" id="GO:0009156">
    <property type="term" value="P:ribonucleoside monophosphate biosynthetic process"/>
    <property type="evidence" value="ECO:0007669"/>
    <property type="project" value="InterPro"/>
</dbReference>
<dbReference type="CDD" id="cd06223">
    <property type="entry name" value="PRTases_typeI"/>
    <property type="match status" value="1"/>
</dbReference>
<dbReference type="FunFam" id="3.40.50.2020:FF:000007">
    <property type="entry name" value="Ribose-phosphate pyrophosphokinase"/>
    <property type="match status" value="1"/>
</dbReference>
<dbReference type="Gene3D" id="3.40.50.2020">
    <property type="match status" value="2"/>
</dbReference>
<dbReference type="HAMAP" id="MF_00583_B">
    <property type="entry name" value="RibP_PPkinase_B"/>
    <property type="match status" value="1"/>
</dbReference>
<dbReference type="InterPro" id="IPR000842">
    <property type="entry name" value="PRib_PP_synth_CS"/>
</dbReference>
<dbReference type="InterPro" id="IPR029099">
    <property type="entry name" value="Pribosyltran_N"/>
</dbReference>
<dbReference type="InterPro" id="IPR000836">
    <property type="entry name" value="PRibTrfase_dom"/>
</dbReference>
<dbReference type="InterPro" id="IPR029057">
    <property type="entry name" value="PRTase-like"/>
</dbReference>
<dbReference type="InterPro" id="IPR005946">
    <property type="entry name" value="Rib-P_diPkinase"/>
</dbReference>
<dbReference type="InterPro" id="IPR037515">
    <property type="entry name" value="Rib-P_diPkinase_bac"/>
</dbReference>
<dbReference type="NCBIfam" id="NF002320">
    <property type="entry name" value="PRK01259.1"/>
    <property type="match status" value="1"/>
</dbReference>
<dbReference type="NCBIfam" id="NF002758">
    <property type="entry name" value="PRK02812.1"/>
    <property type="match status" value="1"/>
</dbReference>
<dbReference type="NCBIfam" id="TIGR01251">
    <property type="entry name" value="ribP_PPkin"/>
    <property type="match status" value="1"/>
</dbReference>
<dbReference type="PANTHER" id="PTHR10210">
    <property type="entry name" value="RIBOSE-PHOSPHATE DIPHOSPHOKINASE FAMILY MEMBER"/>
    <property type="match status" value="1"/>
</dbReference>
<dbReference type="PANTHER" id="PTHR10210:SF94">
    <property type="entry name" value="RIBOSE-PHOSPHATE PYROPHOSPHOKINASE 2, CHLOROPLASTIC"/>
    <property type="match status" value="1"/>
</dbReference>
<dbReference type="Pfam" id="PF14572">
    <property type="entry name" value="Pribosyl_synth"/>
    <property type="match status" value="1"/>
</dbReference>
<dbReference type="Pfam" id="PF13793">
    <property type="entry name" value="Pribosyltran_N"/>
    <property type="match status" value="1"/>
</dbReference>
<dbReference type="SMART" id="SM01400">
    <property type="entry name" value="Pribosyltran_N"/>
    <property type="match status" value="1"/>
</dbReference>
<dbReference type="SUPFAM" id="SSF53271">
    <property type="entry name" value="PRTase-like"/>
    <property type="match status" value="1"/>
</dbReference>
<dbReference type="PROSITE" id="PS00114">
    <property type="entry name" value="PRPP_SYNTHASE"/>
    <property type="match status" value="1"/>
</dbReference>
<name>KPRS2_ARATH</name>